<dbReference type="SMR" id="P86237"/>
<dbReference type="STRING" id="10036.ENSMAUP00000016120"/>
<dbReference type="eggNOG" id="KOG0101">
    <property type="taxonomic scope" value="Eukaryota"/>
</dbReference>
<dbReference type="Proteomes" id="UP000189706">
    <property type="component" value="Unplaced"/>
</dbReference>
<dbReference type="GO" id="GO:0005524">
    <property type="term" value="F:ATP binding"/>
    <property type="evidence" value="ECO:0007669"/>
    <property type="project" value="UniProtKB-KW"/>
</dbReference>
<dbReference type="GO" id="GO:0140662">
    <property type="term" value="F:ATP-dependent protein folding chaperone"/>
    <property type="evidence" value="ECO:0007669"/>
    <property type="project" value="InterPro"/>
</dbReference>
<dbReference type="Gene3D" id="3.30.420.40">
    <property type="match status" value="1"/>
</dbReference>
<dbReference type="InterPro" id="IPR043129">
    <property type="entry name" value="ATPase_NBD"/>
</dbReference>
<dbReference type="InterPro" id="IPR013126">
    <property type="entry name" value="Hsp_70_fam"/>
</dbReference>
<dbReference type="PANTHER" id="PTHR19375">
    <property type="entry name" value="HEAT SHOCK PROTEIN 70KDA"/>
    <property type="match status" value="1"/>
</dbReference>
<dbReference type="Pfam" id="PF00012">
    <property type="entry name" value="HSP70"/>
    <property type="match status" value="1"/>
</dbReference>
<dbReference type="SUPFAM" id="SSF53067">
    <property type="entry name" value="Actin-like ATPase domain"/>
    <property type="match status" value="1"/>
</dbReference>
<name>HS71L_MESAU</name>
<proteinExistence type="evidence at protein level"/>
<reference key="1">
    <citation type="journal article" date="2010" name="Asian J. Androl.">
        <title>Glucose-regulated protein precursor (GRP78) and tumor rejection antigen (GP96) are unique to hamster caput epididymal spermatozoa.</title>
        <authorList>
            <person name="Kameshwari D.B."/>
            <person name="Bhande S."/>
            <person name="Sundaram C.S."/>
            <person name="Kota V."/>
            <person name="Siva A.B."/>
            <person name="Shivaji S."/>
        </authorList>
    </citation>
    <scope>IDENTIFICATION BY MASS SPECTROMETRY</scope>
    <scope>TISSUE SPECIFICITY</scope>
</reference>
<gene>
    <name evidence="3" type="primary">HSPA1L</name>
</gene>
<keyword id="KW-0067">ATP-binding</keyword>
<keyword id="KW-0143">Chaperone</keyword>
<keyword id="KW-0547">Nucleotide-binding</keyword>
<keyword id="KW-1185">Reference proteome</keyword>
<keyword id="KW-0346">Stress response</keyword>
<protein>
    <recommendedName>
        <fullName evidence="3">Heat shock 70 kDa protein 1-like</fullName>
        <shortName evidence="3">Heat shock 70 kDa protein 1L</shortName>
    </recommendedName>
</protein>
<feature type="chain" id="PRO_0000394743" description="Heat shock 70 kDa protein 1-like">
    <location>
        <begin position="1" status="less than"/>
        <end position="117" status="greater than"/>
    </location>
</feature>
<feature type="binding site" evidence="1">
    <location>
        <begin position="72"/>
        <end position="75"/>
    </location>
    <ligand>
        <name>ATP</name>
        <dbReference type="ChEBI" id="CHEBI:30616"/>
    </ligand>
</feature>
<feature type="binding site" evidence="1">
    <location>
        <begin position="84"/>
        <end position="87"/>
    </location>
    <ligand>
        <name>ATP</name>
        <dbReference type="ChEBI" id="CHEBI:30616"/>
    </ligand>
</feature>
<feature type="non-consecutive residues" evidence="6">
    <location>
        <begin position="13"/>
        <end position="14"/>
    </location>
</feature>
<feature type="non-consecutive residues" evidence="6">
    <location>
        <begin position="27"/>
        <end position="28"/>
    </location>
</feature>
<feature type="non-consecutive residues" evidence="6">
    <location>
        <begin position="39"/>
        <end position="40"/>
    </location>
</feature>
<feature type="non-consecutive residues" evidence="6">
    <location>
        <begin position="66"/>
        <end position="67"/>
    </location>
</feature>
<feature type="non-consecutive residues" evidence="6">
    <location>
        <begin position="73"/>
        <end position="74"/>
    </location>
</feature>
<feature type="non-consecutive residues" evidence="6">
    <location>
        <begin position="87"/>
        <end position="88"/>
    </location>
</feature>
<feature type="non-consecutive residues" evidence="6">
    <location>
        <begin position="100"/>
        <end position="101"/>
    </location>
</feature>
<feature type="non-terminal residue">
    <location>
        <position position="1"/>
    </location>
</feature>
<feature type="non-terminal residue">
    <location>
        <position position="117"/>
    </location>
</feature>
<organism>
    <name type="scientific">Mesocricetus auratus</name>
    <name type="common">Golden hamster</name>
    <dbReference type="NCBI Taxonomy" id="10036"/>
    <lineage>
        <taxon>Eukaryota</taxon>
        <taxon>Metazoa</taxon>
        <taxon>Chordata</taxon>
        <taxon>Craniata</taxon>
        <taxon>Vertebrata</taxon>
        <taxon>Euteleostomi</taxon>
        <taxon>Mammalia</taxon>
        <taxon>Eutheria</taxon>
        <taxon>Euarchontoglires</taxon>
        <taxon>Glires</taxon>
        <taxon>Rodentia</taxon>
        <taxon>Myomorpha</taxon>
        <taxon>Muroidea</taxon>
        <taxon>Cricetidae</taxon>
        <taxon>Cricetinae</taxon>
        <taxon>Mesocricetus</taxon>
    </lineage>
</organism>
<evidence type="ECO:0000250" key="1"/>
<evidence type="ECO:0000250" key="2">
    <source>
        <dbReference type="UniProtKB" id="P34931"/>
    </source>
</evidence>
<evidence type="ECO:0000250" key="3">
    <source>
        <dbReference type="UniProtKB" id="P55063"/>
    </source>
</evidence>
<evidence type="ECO:0000255" key="4"/>
<evidence type="ECO:0000269" key="5">
    <source>
    </source>
</evidence>
<evidence type="ECO:0000305" key="6"/>
<accession>P86237</accession>
<comment type="function">
    <text evidence="2">Molecular chaperone implicated in a wide variety of cellular processes, including protection of the proteome from stress, folding and transport of newly synthesized polypeptides, activation of proteolysis of misfolded proteins and the formation and dissociation of protein complexes. Plays a pivotal role in the protein quality control system, ensuring the correct folding of proteins, the re-folding of misfolded proteins and controlling the targeting of proteins for subsequent degradation. This is achieved through cycles of ATP binding, ATP hydrolysis and ADP release, mediated by co-chaperones. The affinity for polypeptides is regulated by its nucleotide bound state. In the ATP-bound form, it has a low affinity for substrate proteins. However, upon hydrolysis of the ATP to ADP, it undergoes a conformational change that increases its affinity for substrate proteins. It goes through repeated cycles of ATP hydrolysis and nucleotide exchange, which permits cycles of substrate binding and release. Positive regulator of PRKN translocation to damaged mitochondria.</text>
</comment>
<comment type="subunit">
    <text evidence="2">Interacts with PRKN.</text>
</comment>
<comment type="tissue specificity">
    <text evidence="5">Detected at higher levels in caput epididymal spermatazoa than in cauda epididymal spermatazoa (at protein level).</text>
</comment>
<comment type="domain">
    <text evidence="2">The N-terminal nucleotide binding domain (NBD) (also known as the ATPase domain) is responsible for binding and hydrolyzing ATP. The C-terminal substrate-binding domain (SBD) (also known as peptide-binding domain) binds to the client/substrate proteins. The two domains are allosterically coupled so that, when ATP is bound to the NBD, the SBD binds relatively weakly to clients. When ADP is bound in the NBD, a conformational change enhances the affinity of the SBD for client proteins.</text>
</comment>
<comment type="similarity">
    <text evidence="4">Belongs to the heat shock protein 70 family.</text>
</comment>
<sequence length="117" mass="13146">TTPSYVAFTDTERLWPFQVINEAGKPKDAGVIAGLNVLRATAGDTHLGGEDFDNRLVSHFVEEFKRLRTACERAKIHDIVLVGGSTRLLQDYFNGRDLNKITITNDKGRLSKEEIER</sequence>